<evidence type="ECO:0000255" key="1">
    <source>
        <dbReference type="HAMAP-Rule" id="MF_00050"/>
    </source>
</evidence>
<reference key="1">
    <citation type="journal article" date="2006" name="Proc. Natl. Acad. Sci. U.S.A.">
        <title>The complete genome sequence of a chronic atrophic gastritis Helicobacter pylori strain: evolution during disease progression.</title>
        <authorList>
            <person name="Oh J.D."/>
            <person name="Kling-Baeckhed H."/>
            <person name="Giannakis M."/>
            <person name="Xu J."/>
            <person name="Fulton R.S."/>
            <person name="Fulton L.A."/>
            <person name="Cordum H.S."/>
            <person name="Wang C."/>
            <person name="Elliott G."/>
            <person name="Edwards J."/>
            <person name="Mardis E.R."/>
            <person name="Engstrand L.G."/>
            <person name="Gordon J.I."/>
        </authorList>
    </citation>
    <scope>NUCLEOTIDE SEQUENCE [LARGE SCALE GENOMIC DNA]</scope>
    <source>
        <strain>HPAG1</strain>
    </source>
</reference>
<name>EFTS_HELPH</name>
<proteinExistence type="inferred from homology"/>
<comment type="function">
    <text evidence="1">Associates with the EF-Tu.GDP complex and induces the exchange of GDP to GTP. It remains bound to the aminoacyl-tRNA.EF-Tu.GTP complex up to the GTP hydrolysis stage on the ribosome.</text>
</comment>
<comment type="subcellular location">
    <subcellularLocation>
        <location evidence="1">Cytoplasm</location>
    </subcellularLocation>
</comment>
<comment type="similarity">
    <text evidence="1">Belongs to the EF-Ts family.</text>
</comment>
<gene>
    <name evidence="1" type="primary">tsf</name>
    <name type="ordered locus">HPAG1_1504</name>
</gene>
<sequence length="355" mass="39698">MSGISAQLVKKLRDLTDAGMMDCKKALVEVAGDLQKAIDFLREKGLSKAAKKADRIAAEGVIALEVAPDFKSAMMVEINSETDFVAKNEGFKELVKKTLETIKAHNIHATEELLKSPLDNKPFEEYLHSQIAVIGENILVRKIAHLKAPSSHIINGYAHSNARVGVLIGIKYDNEKNAPKVVELARNIAMHAAAMKPQVLDCKDFSLDFVKKETLALIAEIEKDNEEAKRLGKPLKNIPTFGSRIELSDEVLAHQKKAFEDELKAQGKPEKIWDKIVPGKMERFIADNTLIDQRLTLLGQFYVMDDKKTIAQVVADCSKEWDDDLKITEYVRFELGEGIEKKAENFAEEVALQMK</sequence>
<organism>
    <name type="scientific">Helicobacter pylori (strain HPAG1)</name>
    <dbReference type="NCBI Taxonomy" id="357544"/>
    <lineage>
        <taxon>Bacteria</taxon>
        <taxon>Pseudomonadati</taxon>
        <taxon>Campylobacterota</taxon>
        <taxon>Epsilonproteobacteria</taxon>
        <taxon>Campylobacterales</taxon>
        <taxon>Helicobacteraceae</taxon>
        <taxon>Helicobacter</taxon>
    </lineage>
</organism>
<feature type="chain" id="PRO_1000006107" description="Elongation factor Ts">
    <location>
        <begin position="1"/>
        <end position="355"/>
    </location>
</feature>
<feature type="region of interest" description="Involved in Mg(2+) ion dislocation from EF-Tu" evidence="1">
    <location>
        <begin position="82"/>
        <end position="85"/>
    </location>
</feature>
<accession>Q1CR51</accession>
<dbReference type="EMBL" id="CP000241">
    <property type="protein sequence ID" value="ABF85571.1"/>
    <property type="molecule type" value="Genomic_DNA"/>
</dbReference>
<dbReference type="RefSeq" id="WP_000014377.1">
    <property type="nucleotide sequence ID" value="NC_008086.1"/>
</dbReference>
<dbReference type="SMR" id="Q1CR51"/>
<dbReference type="KEGG" id="hpa:HPAG1_1504"/>
<dbReference type="HOGENOM" id="CLU_047155_0_1_7"/>
<dbReference type="GO" id="GO:0005737">
    <property type="term" value="C:cytoplasm"/>
    <property type="evidence" value="ECO:0007669"/>
    <property type="project" value="UniProtKB-SubCell"/>
</dbReference>
<dbReference type="GO" id="GO:0003746">
    <property type="term" value="F:translation elongation factor activity"/>
    <property type="evidence" value="ECO:0007669"/>
    <property type="project" value="UniProtKB-UniRule"/>
</dbReference>
<dbReference type="CDD" id="cd14275">
    <property type="entry name" value="UBA_EF-Ts"/>
    <property type="match status" value="1"/>
</dbReference>
<dbReference type="FunFam" id="1.10.286.20:FF:000004">
    <property type="entry name" value="Elongation factor Ts"/>
    <property type="match status" value="1"/>
</dbReference>
<dbReference type="FunFam" id="1.10.8.10:FF:000001">
    <property type="entry name" value="Elongation factor Ts"/>
    <property type="match status" value="1"/>
</dbReference>
<dbReference type="FunFam" id="3.30.479.20:FF:000029">
    <property type="entry name" value="Elongation factor Ts"/>
    <property type="match status" value="1"/>
</dbReference>
<dbReference type="Gene3D" id="1.10.286.20">
    <property type="match status" value="2"/>
</dbReference>
<dbReference type="Gene3D" id="1.10.8.10">
    <property type="entry name" value="DNA helicase RuvA subunit, C-terminal domain"/>
    <property type="match status" value="1"/>
</dbReference>
<dbReference type="Gene3D" id="3.30.479.20">
    <property type="entry name" value="Elongation factor Ts, dimerisation domain"/>
    <property type="match status" value="3"/>
</dbReference>
<dbReference type="HAMAP" id="MF_00050">
    <property type="entry name" value="EF_Ts"/>
    <property type="match status" value="1"/>
</dbReference>
<dbReference type="InterPro" id="IPR036402">
    <property type="entry name" value="EF-Ts_dimer_sf"/>
</dbReference>
<dbReference type="InterPro" id="IPR001816">
    <property type="entry name" value="Transl_elong_EFTs/EF1B"/>
</dbReference>
<dbReference type="InterPro" id="IPR014039">
    <property type="entry name" value="Transl_elong_EFTs/EF1B_dimer"/>
</dbReference>
<dbReference type="InterPro" id="IPR018101">
    <property type="entry name" value="Transl_elong_Ts_CS"/>
</dbReference>
<dbReference type="InterPro" id="IPR009060">
    <property type="entry name" value="UBA-like_sf"/>
</dbReference>
<dbReference type="NCBIfam" id="TIGR00116">
    <property type="entry name" value="tsf"/>
    <property type="match status" value="1"/>
</dbReference>
<dbReference type="PANTHER" id="PTHR11741">
    <property type="entry name" value="ELONGATION FACTOR TS"/>
    <property type="match status" value="1"/>
</dbReference>
<dbReference type="PANTHER" id="PTHR11741:SF0">
    <property type="entry name" value="ELONGATION FACTOR TS, MITOCHONDRIAL"/>
    <property type="match status" value="1"/>
</dbReference>
<dbReference type="Pfam" id="PF00889">
    <property type="entry name" value="EF_TS"/>
    <property type="match status" value="1"/>
</dbReference>
<dbReference type="SUPFAM" id="SSF54713">
    <property type="entry name" value="Elongation factor Ts (EF-Ts), dimerisation domain"/>
    <property type="match status" value="1"/>
</dbReference>
<dbReference type="SUPFAM" id="SSF46934">
    <property type="entry name" value="UBA-like"/>
    <property type="match status" value="1"/>
</dbReference>
<dbReference type="PROSITE" id="PS01126">
    <property type="entry name" value="EF_TS_1"/>
    <property type="match status" value="1"/>
</dbReference>
<dbReference type="PROSITE" id="PS01127">
    <property type="entry name" value="EF_TS_2"/>
    <property type="match status" value="1"/>
</dbReference>
<keyword id="KW-0963">Cytoplasm</keyword>
<keyword id="KW-0251">Elongation factor</keyword>
<keyword id="KW-0648">Protein biosynthesis</keyword>
<protein>
    <recommendedName>
        <fullName evidence="1">Elongation factor Ts</fullName>
        <shortName evidence="1">EF-Ts</shortName>
    </recommendedName>
</protein>